<dbReference type="EC" id="2.3.2.27" evidence="3"/>
<dbReference type="EMBL" id="AB047627">
    <property type="protein sequence ID" value="BAB12151.1"/>
    <property type="molecule type" value="mRNA"/>
</dbReference>
<dbReference type="EMBL" id="AB168188">
    <property type="protein sequence ID" value="BAE00313.1"/>
    <property type="molecule type" value="mRNA"/>
</dbReference>
<dbReference type="EMBL" id="AB168298">
    <property type="protein sequence ID" value="BAE00422.1"/>
    <property type="molecule type" value="mRNA"/>
</dbReference>
<dbReference type="SMR" id="Q4R9A8"/>
<dbReference type="STRING" id="9541.ENSMFAP00000008578"/>
<dbReference type="eggNOG" id="KOG0396">
    <property type="taxonomic scope" value="Eukaryota"/>
</dbReference>
<dbReference type="Proteomes" id="UP000233100">
    <property type="component" value="Unplaced"/>
</dbReference>
<dbReference type="GO" id="GO:0005737">
    <property type="term" value="C:cytoplasm"/>
    <property type="evidence" value="ECO:0007669"/>
    <property type="project" value="UniProtKB-SubCell"/>
</dbReference>
<dbReference type="GO" id="GO:0005856">
    <property type="term" value="C:cytoskeleton"/>
    <property type="evidence" value="ECO:0007669"/>
    <property type="project" value="UniProtKB-SubCell"/>
</dbReference>
<dbReference type="GO" id="GO:0034657">
    <property type="term" value="C:GID complex"/>
    <property type="evidence" value="ECO:0007669"/>
    <property type="project" value="TreeGrafter"/>
</dbReference>
<dbReference type="GO" id="GO:0016363">
    <property type="term" value="C:nuclear matrix"/>
    <property type="evidence" value="ECO:0007669"/>
    <property type="project" value="UniProtKB-SubCell"/>
</dbReference>
<dbReference type="GO" id="GO:0005654">
    <property type="term" value="C:nucleoplasm"/>
    <property type="evidence" value="ECO:0000250"/>
    <property type="project" value="UniProtKB"/>
</dbReference>
<dbReference type="GO" id="GO:0005886">
    <property type="term" value="C:plasma membrane"/>
    <property type="evidence" value="ECO:0007669"/>
    <property type="project" value="UniProtKB-SubCell"/>
</dbReference>
<dbReference type="GO" id="GO:0003779">
    <property type="term" value="F:actin binding"/>
    <property type="evidence" value="ECO:0007669"/>
    <property type="project" value="UniProtKB-KW"/>
</dbReference>
<dbReference type="GO" id="GO:0061630">
    <property type="term" value="F:ubiquitin protein ligase activity"/>
    <property type="evidence" value="ECO:0007669"/>
    <property type="project" value="InterPro"/>
</dbReference>
<dbReference type="GO" id="GO:0008270">
    <property type="term" value="F:zinc ion binding"/>
    <property type="evidence" value="ECO:0007669"/>
    <property type="project" value="UniProtKB-KW"/>
</dbReference>
<dbReference type="GO" id="GO:0051301">
    <property type="term" value="P:cell division"/>
    <property type="evidence" value="ECO:0007669"/>
    <property type="project" value="UniProtKB-KW"/>
</dbReference>
<dbReference type="GO" id="GO:0043249">
    <property type="term" value="P:erythrocyte maturation"/>
    <property type="evidence" value="ECO:0007669"/>
    <property type="project" value="UniProtKB-KW"/>
</dbReference>
<dbReference type="GO" id="GO:0043161">
    <property type="term" value="P:proteasome-mediated ubiquitin-dependent protein catabolic process"/>
    <property type="evidence" value="ECO:0007669"/>
    <property type="project" value="InterPro"/>
</dbReference>
<dbReference type="CDD" id="cd16659">
    <property type="entry name" value="RING-Ubox_Emp"/>
    <property type="match status" value="1"/>
</dbReference>
<dbReference type="InterPro" id="IPR013144">
    <property type="entry name" value="CRA_dom"/>
</dbReference>
<dbReference type="InterPro" id="IPR024964">
    <property type="entry name" value="CTLH/CRA"/>
</dbReference>
<dbReference type="InterPro" id="IPR006595">
    <property type="entry name" value="CTLH_C"/>
</dbReference>
<dbReference type="InterPro" id="IPR045098">
    <property type="entry name" value="Fyv10_fam"/>
</dbReference>
<dbReference type="InterPro" id="IPR006594">
    <property type="entry name" value="LisH"/>
</dbReference>
<dbReference type="InterPro" id="IPR044063">
    <property type="entry name" value="ZF_RING_GID"/>
</dbReference>
<dbReference type="PANTHER" id="PTHR12170:SF2">
    <property type="entry name" value="E3 UBIQUITIN-PROTEIN TRANSFERASE MAEA"/>
    <property type="match status" value="1"/>
</dbReference>
<dbReference type="PANTHER" id="PTHR12170">
    <property type="entry name" value="MACROPHAGE ERYTHROBLAST ATTACHER-RELATED"/>
    <property type="match status" value="1"/>
</dbReference>
<dbReference type="Pfam" id="PF10607">
    <property type="entry name" value="CTLH"/>
    <property type="match status" value="1"/>
</dbReference>
<dbReference type="SMART" id="SM00757">
    <property type="entry name" value="CRA"/>
    <property type="match status" value="1"/>
</dbReference>
<dbReference type="SMART" id="SM00668">
    <property type="entry name" value="CTLH"/>
    <property type="match status" value="1"/>
</dbReference>
<dbReference type="SMART" id="SM00667">
    <property type="entry name" value="LisH"/>
    <property type="match status" value="1"/>
</dbReference>
<dbReference type="SUPFAM" id="SSF57850">
    <property type="entry name" value="RING/U-box"/>
    <property type="match status" value="1"/>
</dbReference>
<dbReference type="PROSITE" id="PS50897">
    <property type="entry name" value="CTLH"/>
    <property type="match status" value="1"/>
</dbReference>
<dbReference type="PROSITE" id="PS50896">
    <property type="entry name" value="LISH"/>
    <property type="match status" value="1"/>
</dbReference>
<dbReference type="PROSITE" id="PS51867">
    <property type="entry name" value="ZF_RING_GID"/>
    <property type="match status" value="1"/>
</dbReference>
<keyword id="KW-0009">Actin-binding</keyword>
<keyword id="KW-0025">Alternative splicing</keyword>
<keyword id="KW-0131">Cell cycle</keyword>
<keyword id="KW-0132">Cell division</keyword>
<keyword id="KW-1003">Cell membrane</keyword>
<keyword id="KW-0963">Cytoplasm</keyword>
<keyword id="KW-0206">Cytoskeleton</keyword>
<keyword id="KW-0265">Erythrocyte maturation</keyword>
<keyword id="KW-0472">Membrane</keyword>
<keyword id="KW-0479">Metal-binding</keyword>
<keyword id="KW-0539">Nucleus</keyword>
<keyword id="KW-0597">Phosphoprotein</keyword>
<keyword id="KW-1185">Reference proteome</keyword>
<keyword id="KW-0808">Transferase</keyword>
<keyword id="KW-0832">Ubl conjugation</keyword>
<keyword id="KW-0833">Ubl conjugation pathway</keyword>
<keyword id="KW-0862">Zinc</keyword>
<keyword id="KW-0863">Zinc-finger</keyword>
<name>MAEA_MACFA</name>
<sequence length="396" mass="45315">MAVQESAVQLSMTLKVQEYPTLKVPYETLNKRFRAAQKNIDRETSHVTMVVAELEKTLSGCPAVDSVVSLLDGVVEKLSVLKRKAVESIQAEDESAKLCKRRIEHLKEHSSDQPAAASVWKRKRMDRMMVEHLLRCGYYNTAVKLARQSGIEDLVNIEMFLTAKEVEESLERRETATCLAWCHDNKSRLRKMKSCLEFSLRIQEFIELIRQNKRLDAVRHARKHFSQAEGSQLDEVRQAMGMLAFPPDTHISPYKDLLDPARWRMLIQQFRYDNYRLHQLGNNSVFTLTLQAGLSAIKTPQCYKEDGSSKSPDCPVCSRSLNKLAQPLPMAHCANSRLVCKISGDVMNENNPPMMLPNGYVYGYNSLLSIRQDDKVVCPRTKEVFHFSQAEKVYIM</sequence>
<comment type="function">
    <text evidence="2 3">Core component of the CTLH E3 ubiquitin-protein ligase complex that selectively accepts ubiquitin from UBE2H and mediates ubiquitination and subsequent proteasomal degradation of the transcription factor HBP1. MAEA and RMND5A are both required for catalytic activity of the CTLH E3 ubiquitin-protein ligase complex. MAEA is required for normal cell proliferation. The CTLH E3 ubiquitin-protein ligase complex is not required for the degradation of enzymes involved in gluconeogenesis, such as FBP1 (By similarity). Plays a role in erythroblast enucleation during erythrocyte maturation and in the development of mature macrophages (By similarity). Mediates the attachment of erythroid cell to mature macrophages; this MAEA-mediated contact inhibits erythroid cell apoptosis (By similarity). Participates in erythroblastic island formation, which is the functional unit of definitive erythropoiesis. Associates with F-actin to regulate actin distribution in erythroblasts and macrophages (By similarity). May contribute to nuclear architecture and cells division events (By similarity).</text>
</comment>
<comment type="catalytic activity">
    <reaction evidence="3">
        <text>S-ubiquitinyl-[E2 ubiquitin-conjugating enzyme]-L-cysteine + [acceptor protein]-L-lysine = [E2 ubiquitin-conjugating enzyme]-L-cysteine + N(6)-ubiquitinyl-[acceptor protein]-L-lysine.</text>
        <dbReference type="EC" id="2.3.2.27"/>
    </reaction>
</comment>
<comment type="subunit">
    <text evidence="3">Identified in the CTLH complex that contains GID4, RANBP9 and/or RANBP10, MKLN1, MAEA, RMND5A (or alternatively its paralog RMND5B), GID8, ARMC8, WDR26 and YPEL5. Within this complex, MAEA, RMND5A (or alternatively its paralog RMND5B), GID8, WDR26, and RANBP9 and/or RANBP10 form the catalytic core, while GID4, MKLN1, ARMC8 and YPEL5 have ancillary roles. Interacts with F-actin.</text>
</comment>
<comment type="subcellular location">
    <subcellularLocation>
        <location evidence="2">Cytoplasm</location>
    </subcellularLocation>
    <subcellularLocation>
        <location evidence="3">Nucleus</location>
        <location evidence="3">Nucleoplasm</location>
    </subcellularLocation>
    <subcellularLocation>
        <location evidence="2">Nucleus matrix</location>
    </subcellularLocation>
    <subcellularLocation>
        <location evidence="2">Cell membrane</location>
    </subcellularLocation>
    <subcellularLocation>
        <location evidence="2">Cytoplasm</location>
        <location evidence="2">Cytoskeleton</location>
    </subcellularLocation>
    <text evidence="2 3">Detected in a nuclear, speckled-like pattern (By similarity). Localized with condensed chromatin at prophase; Detected in nuclear spindle poles at metaphase and in the contractile ring during telophase and cytokinesis (By similarity). Present in cytoplasm, nuclear matrix and at the cell surface in macrophages; predominantly nuclear in immature macrophages and predominantly detected at the cell surface in mature macrophages. Colocalizes with F-actin in macrophages (By similarity).</text>
</comment>
<comment type="alternative products">
    <event type="alternative splicing"/>
    <isoform>
        <id>Q4R9A8-1</id>
        <name>1</name>
        <sequence type="displayed"/>
    </isoform>
    <isoform>
        <id>Q4R9A8-2</id>
        <name>2</name>
        <sequence type="described" ref="VSP_024795"/>
    </isoform>
    <isoform>
        <id>Q4R9A8-3</id>
        <name>3</name>
        <sequence type="described" ref="VSP_024794 VSP_024796"/>
    </isoform>
</comment>
<comment type="domain">
    <text evidence="3">The expected RING-type zinc finger domain is highly divergent and most of the expected Cys residues are not conserved. Still, the protein is required for CTLH complex E3 ubiquitin-protein transferase activity. In addition, the conserved Cys-314 in this highly divergent region is required for ubiquitination by the yeast GID complex, suggesting a direct role in catalyzing ubiquitination.</text>
</comment>
<comment type="PTM">
    <text evidence="3">Autoubiquitinated as component of the CTLH E3 ubiquitin-protein ligase complex (in vitro).</text>
</comment>
<organism>
    <name type="scientific">Macaca fascicularis</name>
    <name type="common">Crab-eating macaque</name>
    <name type="synonym">Cynomolgus monkey</name>
    <dbReference type="NCBI Taxonomy" id="9541"/>
    <lineage>
        <taxon>Eukaryota</taxon>
        <taxon>Metazoa</taxon>
        <taxon>Chordata</taxon>
        <taxon>Craniata</taxon>
        <taxon>Vertebrata</taxon>
        <taxon>Euteleostomi</taxon>
        <taxon>Mammalia</taxon>
        <taxon>Eutheria</taxon>
        <taxon>Euarchontoglires</taxon>
        <taxon>Primates</taxon>
        <taxon>Haplorrhini</taxon>
        <taxon>Catarrhini</taxon>
        <taxon>Cercopithecidae</taxon>
        <taxon>Cercopithecinae</taxon>
        <taxon>Macaca</taxon>
    </lineage>
</organism>
<evidence type="ECO:0000250" key="1">
    <source>
        <dbReference type="UniProtKB" id="P40492"/>
    </source>
</evidence>
<evidence type="ECO:0000250" key="2">
    <source>
        <dbReference type="UniProtKB" id="Q4VC33"/>
    </source>
</evidence>
<evidence type="ECO:0000250" key="3">
    <source>
        <dbReference type="UniProtKB" id="Q7L5Y9"/>
    </source>
</evidence>
<evidence type="ECO:0000255" key="4">
    <source>
        <dbReference type="PROSITE-ProRule" id="PRU00058"/>
    </source>
</evidence>
<evidence type="ECO:0000255" key="5">
    <source>
        <dbReference type="PROSITE-ProRule" id="PRU00126"/>
    </source>
</evidence>
<evidence type="ECO:0000255" key="6">
    <source>
        <dbReference type="PROSITE-ProRule" id="PRU01215"/>
    </source>
</evidence>
<evidence type="ECO:0000303" key="7">
    <source ref="1"/>
</evidence>
<evidence type="ECO:0000303" key="8">
    <source ref="2"/>
</evidence>
<evidence type="ECO:0000305" key="9"/>
<accession>Q4R9A8</accession>
<accession>Q4R8Z9</accession>
<accession>Q9GMU8</accession>
<feature type="chain" id="PRO_0000284937" description="E3 ubiquitin-protein transferase MAEA">
    <location>
        <begin position="1"/>
        <end position="396"/>
    </location>
</feature>
<feature type="domain" description="LisH" evidence="5">
    <location>
        <begin position="121"/>
        <end position="153"/>
    </location>
</feature>
<feature type="domain" description="CTLH" evidence="4">
    <location>
        <begin position="159"/>
        <end position="216"/>
    </location>
</feature>
<feature type="zinc finger region" description="RING-Gid-type" evidence="6">
    <location>
        <begin position="314"/>
        <end position="381"/>
    </location>
</feature>
<feature type="region of interest" description="Extracellular and involved in cell to cell contact" evidence="3">
    <location>
        <begin position="1"/>
        <end position="124"/>
    </location>
</feature>
<feature type="site" description="Essential for ubiquitin ligase activity" evidence="1">
    <location>
        <position position="314"/>
    </location>
</feature>
<feature type="modified residue" description="Phosphothreonine" evidence="3">
    <location>
        <position position="28"/>
    </location>
</feature>
<feature type="splice variant" id="VSP_024794" description="In isoform 3." evidence="7">
    <location>
        <begin position="1"/>
        <end position="214"/>
    </location>
</feature>
<feature type="splice variant" id="VSP_024795" description="In isoform 2." evidence="8">
    <location>
        <begin position="145"/>
        <end position="242"/>
    </location>
</feature>
<feature type="splice variant" id="VSP_024796" description="In isoform 3." evidence="7">
    <original>LDAV</original>
    <variation>MLFF</variation>
    <location>
        <begin position="215"/>
        <end position="218"/>
    </location>
</feature>
<feature type="sequence conflict" description="In Ref. 2; BAE00422." evidence="9" ref="2">
    <original>V</original>
    <variation>A</variation>
    <location>
        <position position="8"/>
    </location>
</feature>
<proteinExistence type="evidence at transcript level"/>
<reference key="1">
    <citation type="submission" date="2000-08" db="EMBL/GenBank/DDBJ databases">
        <title>Isolation of full-length cDNA clones from macaque brain cDNA libraries.</title>
        <authorList>
            <person name="Osada N."/>
            <person name="Hida M."/>
            <person name="Kusuda J."/>
            <person name="Tanuma R."/>
            <person name="Iseki K."/>
            <person name="Hirai M."/>
            <person name="Terao K."/>
            <person name="Suzuki Y."/>
            <person name="Sugano S."/>
            <person name="Hashimoto K."/>
        </authorList>
    </citation>
    <scope>NUCLEOTIDE SEQUENCE [LARGE SCALE MRNA] (ISOFORM 3)</scope>
    <source>
        <tissue>Brain</tissue>
    </source>
</reference>
<reference key="2">
    <citation type="submission" date="2005-06" db="EMBL/GenBank/DDBJ databases">
        <title>DNA sequences of macaque genes expressed in brain or testis and its evolutionary implications.</title>
        <authorList>
            <consortium name="International consortium for macaque cDNA sequencing and analysis"/>
        </authorList>
    </citation>
    <scope>NUCLEOTIDE SEQUENCE [LARGE SCALE MRNA] (ISOFORMS 1 AND 2)</scope>
    <source>
        <tissue>Testis</tissue>
    </source>
</reference>
<protein>
    <recommendedName>
        <fullName>E3 ubiquitin-protein transferase MAEA</fullName>
        <ecNumber evidence="3">2.3.2.27</ecNumber>
    </recommendedName>
    <alternativeName>
        <fullName>Macrophage erythroblast attacher</fullName>
    </alternativeName>
</protein>
<gene>
    <name type="primary">MAEA</name>
    <name type="ORF">QnpA-13115</name>
    <name type="ORF">QtsA-10391</name>
    <name type="ORF">QtsA-11053</name>
</gene>